<protein>
    <recommendedName>
        <fullName evidence="1">Coproheme decarboxylase</fullName>
        <ecNumber evidence="1">1.3.98.5</ecNumber>
    </recommendedName>
    <alternativeName>
        <fullName evidence="1">Coproheme III oxidative decarboxylase</fullName>
    </alternativeName>
    <alternativeName>
        <fullName evidence="1">Hydrogen peroxide-dependent heme synthase</fullName>
    </alternativeName>
</protein>
<sequence>MSQAAETLDGWYSLHLFYAVDWASLRIVPKDERDALVTEFQSFLENTATVRSSKSGDQAIYNITGQKADLLLWFLRPEMKSLNHIENEFNKLRIADFLIPTYSYVSVIELSNYLAGKSDEDPYENPHIKARLYPELPHSDYICFYPMNKRRNETYNWYMLTMEERQKLMYDHGMIGRKYAGKIKQFITGSVGFDDFEWGVTLFSDDVLQFKKIVYEMRFDETTARYGEFGSFFVGHLINTNEFDQFFAIS</sequence>
<accession>A6TZ65</accession>
<comment type="function">
    <text evidence="1">Involved in coproporphyrin-dependent heme b biosynthesis. Catalyzes the decarboxylation of Fe-coproporphyrin III (coproheme) to heme b (protoheme IX), the last step of the pathway. The reaction occurs in a stepwise manner with a three-propionate intermediate.</text>
</comment>
<comment type="catalytic activity">
    <reaction evidence="1">
        <text>Fe-coproporphyrin III + 2 H2O2 + 2 H(+) = heme b + 2 CO2 + 4 H2O</text>
        <dbReference type="Rhea" id="RHEA:56516"/>
        <dbReference type="ChEBI" id="CHEBI:15377"/>
        <dbReference type="ChEBI" id="CHEBI:15378"/>
        <dbReference type="ChEBI" id="CHEBI:16240"/>
        <dbReference type="ChEBI" id="CHEBI:16526"/>
        <dbReference type="ChEBI" id="CHEBI:60344"/>
        <dbReference type="ChEBI" id="CHEBI:68438"/>
        <dbReference type="EC" id="1.3.98.5"/>
    </reaction>
    <physiologicalReaction direction="left-to-right" evidence="1">
        <dbReference type="Rhea" id="RHEA:56517"/>
    </physiologicalReaction>
</comment>
<comment type="catalytic activity">
    <reaction evidence="1">
        <text>Fe-coproporphyrin III + H2O2 + H(+) = harderoheme III + CO2 + 2 H2O</text>
        <dbReference type="Rhea" id="RHEA:57940"/>
        <dbReference type="ChEBI" id="CHEBI:15377"/>
        <dbReference type="ChEBI" id="CHEBI:15378"/>
        <dbReference type="ChEBI" id="CHEBI:16240"/>
        <dbReference type="ChEBI" id="CHEBI:16526"/>
        <dbReference type="ChEBI" id="CHEBI:68438"/>
        <dbReference type="ChEBI" id="CHEBI:142463"/>
    </reaction>
    <physiologicalReaction direction="left-to-right" evidence="1">
        <dbReference type="Rhea" id="RHEA:57941"/>
    </physiologicalReaction>
</comment>
<comment type="catalytic activity">
    <reaction evidence="1">
        <text>harderoheme III + H2O2 + H(+) = heme b + CO2 + 2 H2O</text>
        <dbReference type="Rhea" id="RHEA:57944"/>
        <dbReference type="ChEBI" id="CHEBI:15377"/>
        <dbReference type="ChEBI" id="CHEBI:15378"/>
        <dbReference type="ChEBI" id="CHEBI:16240"/>
        <dbReference type="ChEBI" id="CHEBI:16526"/>
        <dbReference type="ChEBI" id="CHEBI:60344"/>
        <dbReference type="ChEBI" id="CHEBI:142463"/>
    </reaction>
    <physiologicalReaction direction="left-to-right" evidence="1">
        <dbReference type="Rhea" id="RHEA:57945"/>
    </physiologicalReaction>
</comment>
<comment type="cofactor">
    <cofactor evidence="1">
        <name>Fe-coproporphyrin III</name>
        <dbReference type="ChEBI" id="CHEBI:68438"/>
    </cofactor>
    <text evidence="1">Fe-coproporphyrin III acts both as a substrate and a redox cofactor.</text>
</comment>
<comment type="pathway">
    <text evidence="1">Porphyrin-containing compound metabolism; protoheme biosynthesis.</text>
</comment>
<comment type="similarity">
    <text evidence="1">Belongs to the ChdC family. Type 1 subfamily.</text>
</comment>
<evidence type="ECO:0000255" key="1">
    <source>
        <dbReference type="HAMAP-Rule" id="MF_01442"/>
    </source>
</evidence>
<gene>
    <name evidence="1" type="primary">chdC</name>
    <name type="ordered locus">SaurJH1_0625</name>
</gene>
<name>CHDC_STAA2</name>
<proteinExistence type="inferred from homology"/>
<reference key="1">
    <citation type="submission" date="2007-06" db="EMBL/GenBank/DDBJ databases">
        <title>Complete sequence of chromosome of Staphylococcus aureus subsp. aureus JH1.</title>
        <authorList>
            <consortium name="US DOE Joint Genome Institute"/>
            <person name="Copeland A."/>
            <person name="Lucas S."/>
            <person name="Lapidus A."/>
            <person name="Barry K."/>
            <person name="Detter J.C."/>
            <person name="Glavina del Rio T."/>
            <person name="Hammon N."/>
            <person name="Israni S."/>
            <person name="Dalin E."/>
            <person name="Tice H."/>
            <person name="Pitluck S."/>
            <person name="Chain P."/>
            <person name="Malfatti S."/>
            <person name="Shin M."/>
            <person name="Vergez L."/>
            <person name="Schmutz J."/>
            <person name="Larimer F."/>
            <person name="Land M."/>
            <person name="Hauser L."/>
            <person name="Kyrpides N."/>
            <person name="Ivanova N."/>
            <person name="Tomasz A."/>
            <person name="Richardson P."/>
        </authorList>
    </citation>
    <scope>NUCLEOTIDE SEQUENCE [LARGE SCALE GENOMIC DNA]</scope>
    <source>
        <strain>JH1</strain>
    </source>
</reference>
<dbReference type="EC" id="1.3.98.5" evidence="1"/>
<dbReference type="EMBL" id="CP000736">
    <property type="protein sequence ID" value="ABR51483.1"/>
    <property type="molecule type" value="Genomic_DNA"/>
</dbReference>
<dbReference type="SMR" id="A6TZ65"/>
<dbReference type="KEGG" id="sah:SaurJH1_0625"/>
<dbReference type="HOGENOM" id="CLU_063226_1_0_9"/>
<dbReference type="UniPathway" id="UPA00252"/>
<dbReference type="GO" id="GO:0020037">
    <property type="term" value="F:heme binding"/>
    <property type="evidence" value="ECO:0007669"/>
    <property type="project" value="InterPro"/>
</dbReference>
<dbReference type="GO" id="GO:0046872">
    <property type="term" value="F:metal ion binding"/>
    <property type="evidence" value="ECO:0007669"/>
    <property type="project" value="UniProtKB-KW"/>
</dbReference>
<dbReference type="GO" id="GO:0016634">
    <property type="term" value="F:oxidoreductase activity, acting on the CH-CH group of donors, oxygen as acceptor"/>
    <property type="evidence" value="ECO:0007669"/>
    <property type="project" value="UniProtKB-UniRule"/>
</dbReference>
<dbReference type="GO" id="GO:0004601">
    <property type="term" value="F:peroxidase activity"/>
    <property type="evidence" value="ECO:0007669"/>
    <property type="project" value="InterPro"/>
</dbReference>
<dbReference type="GO" id="GO:0006785">
    <property type="term" value="P:heme B biosynthetic process"/>
    <property type="evidence" value="ECO:0007669"/>
    <property type="project" value="UniProtKB-UniRule"/>
</dbReference>
<dbReference type="Gene3D" id="3.30.70.1030">
    <property type="entry name" value="Apc35880, domain 1"/>
    <property type="match status" value="2"/>
</dbReference>
<dbReference type="HAMAP" id="MF_01442">
    <property type="entry name" value="Coproheme_decarbox_1"/>
    <property type="match status" value="1"/>
</dbReference>
<dbReference type="InterPro" id="IPR031332">
    <property type="entry name" value="CHDC"/>
</dbReference>
<dbReference type="InterPro" id="IPR010644">
    <property type="entry name" value="ChdC/CLD"/>
</dbReference>
<dbReference type="InterPro" id="IPR011008">
    <property type="entry name" value="Dimeric_a/b-barrel"/>
</dbReference>
<dbReference type="NCBIfam" id="NF008913">
    <property type="entry name" value="PRK12276.1"/>
    <property type="match status" value="1"/>
</dbReference>
<dbReference type="PANTHER" id="PTHR36843:SF1">
    <property type="entry name" value="COPROHEME DECARBOXYLASE"/>
    <property type="match status" value="1"/>
</dbReference>
<dbReference type="PANTHER" id="PTHR36843">
    <property type="entry name" value="HEME-DEPENDENT PEROXIDASE YWFI-RELATED"/>
    <property type="match status" value="1"/>
</dbReference>
<dbReference type="Pfam" id="PF06778">
    <property type="entry name" value="Chlor_dismutase"/>
    <property type="match status" value="1"/>
</dbReference>
<dbReference type="SUPFAM" id="SSF54909">
    <property type="entry name" value="Dimeric alpha+beta barrel"/>
    <property type="match status" value="1"/>
</dbReference>
<feature type="chain" id="PRO_1000087457" description="Coproheme decarboxylase">
    <location>
        <begin position="1"/>
        <end position="250"/>
    </location>
</feature>
<feature type="active site" evidence="1">
    <location>
        <position position="145"/>
    </location>
</feature>
<feature type="binding site" evidence="1">
    <location>
        <position position="131"/>
    </location>
    <ligand>
        <name>Fe-coproporphyrin III</name>
        <dbReference type="ChEBI" id="CHEBI:68438"/>
    </ligand>
</feature>
<feature type="binding site" evidence="1">
    <location>
        <begin position="145"/>
        <end position="149"/>
    </location>
    <ligand>
        <name>Fe-coproporphyrin III</name>
        <dbReference type="ChEBI" id="CHEBI:68438"/>
    </ligand>
</feature>
<feature type="binding site" description="axial binding residue" evidence="1">
    <location>
        <position position="172"/>
    </location>
    <ligand>
        <name>Fe-coproporphyrin III</name>
        <dbReference type="ChEBI" id="CHEBI:68438"/>
    </ligand>
    <ligandPart>
        <name>Fe</name>
        <dbReference type="ChEBI" id="CHEBI:18248"/>
    </ligandPart>
</feature>
<feature type="binding site" evidence="1">
    <location>
        <position position="185"/>
    </location>
    <ligand>
        <name>Fe-coproporphyrin III</name>
        <dbReference type="ChEBI" id="CHEBI:68438"/>
    </ligand>
</feature>
<organism>
    <name type="scientific">Staphylococcus aureus (strain JH1)</name>
    <dbReference type="NCBI Taxonomy" id="359787"/>
    <lineage>
        <taxon>Bacteria</taxon>
        <taxon>Bacillati</taxon>
        <taxon>Bacillota</taxon>
        <taxon>Bacilli</taxon>
        <taxon>Bacillales</taxon>
        <taxon>Staphylococcaceae</taxon>
        <taxon>Staphylococcus</taxon>
    </lineage>
</organism>
<keyword id="KW-0349">Heme</keyword>
<keyword id="KW-0350">Heme biosynthesis</keyword>
<keyword id="KW-0408">Iron</keyword>
<keyword id="KW-0479">Metal-binding</keyword>
<keyword id="KW-0560">Oxidoreductase</keyword>